<reference key="1">
    <citation type="journal article" date="2013" name="Gene">
        <title>Identification of a novel gene by whole human genome tiling array.</title>
        <authorList>
            <person name="Ishida H."/>
            <person name="Yagi T."/>
            <person name="Tanaka M."/>
            <person name="Tokuda Y."/>
            <person name="Kamoi K."/>
            <person name="Hongo F."/>
            <person name="Kawauchi A."/>
            <person name="Nakano M."/>
            <person name="Miki T."/>
            <person name="Tashiro K."/>
        </authorList>
    </citation>
    <scope>NUCLEOTIDE SEQUENCE [MRNA] (ISOFORM 5)</scope>
</reference>
<reference key="2">
    <citation type="journal article" date="2006" name="Nature">
        <title>The finished DNA sequence of human chromosome 12.</title>
        <authorList>
            <person name="Scherer S.E."/>
            <person name="Muzny D.M."/>
            <person name="Buhay C.J."/>
            <person name="Chen R."/>
            <person name="Cree A."/>
            <person name="Ding Y."/>
            <person name="Dugan-Rocha S."/>
            <person name="Gill R."/>
            <person name="Gunaratne P."/>
            <person name="Harris R.A."/>
            <person name="Hawes A.C."/>
            <person name="Hernandez J."/>
            <person name="Hodgson A.V."/>
            <person name="Hume J."/>
            <person name="Jackson A."/>
            <person name="Khan Z.M."/>
            <person name="Kovar-Smith C."/>
            <person name="Lewis L.R."/>
            <person name="Lozado R.J."/>
            <person name="Metzker M.L."/>
            <person name="Milosavljevic A."/>
            <person name="Miner G.R."/>
            <person name="Montgomery K.T."/>
            <person name="Morgan M.B."/>
            <person name="Nazareth L.V."/>
            <person name="Scott G."/>
            <person name="Sodergren E."/>
            <person name="Song X.-Z."/>
            <person name="Steffen D."/>
            <person name="Lovering R.C."/>
            <person name="Wheeler D.A."/>
            <person name="Worley K.C."/>
            <person name="Yuan Y."/>
            <person name="Zhang Z."/>
            <person name="Adams C.Q."/>
            <person name="Ansari-Lari M.A."/>
            <person name="Ayele M."/>
            <person name="Brown M.J."/>
            <person name="Chen G."/>
            <person name="Chen Z."/>
            <person name="Clerc-Blankenburg K.P."/>
            <person name="Davis C."/>
            <person name="Delgado O."/>
            <person name="Dinh H.H."/>
            <person name="Draper H."/>
            <person name="Gonzalez-Garay M.L."/>
            <person name="Havlak P."/>
            <person name="Jackson L.R."/>
            <person name="Jacob L.S."/>
            <person name="Kelly S.H."/>
            <person name="Li L."/>
            <person name="Li Z."/>
            <person name="Liu J."/>
            <person name="Liu W."/>
            <person name="Lu J."/>
            <person name="Maheshwari M."/>
            <person name="Nguyen B.-V."/>
            <person name="Okwuonu G.O."/>
            <person name="Pasternak S."/>
            <person name="Perez L.M."/>
            <person name="Plopper F.J.H."/>
            <person name="Santibanez J."/>
            <person name="Shen H."/>
            <person name="Tabor P.E."/>
            <person name="Verduzco D."/>
            <person name="Waldron L."/>
            <person name="Wang Q."/>
            <person name="Williams G.A."/>
            <person name="Zhang J."/>
            <person name="Zhou J."/>
            <person name="Allen C.C."/>
            <person name="Amin A.G."/>
            <person name="Anyalebechi V."/>
            <person name="Bailey M."/>
            <person name="Barbaria J.A."/>
            <person name="Bimage K.E."/>
            <person name="Bryant N.P."/>
            <person name="Burch P.E."/>
            <person name="Burkett C.E."/>
            <person name="Burrell K.L."/>
            <person name="Calderon E."/>
            <person name="Cardenas V."/>
            <person name="Carter K."/>
            <person name="Casias K."/>
            <person name="Cavazos I."/>
            <person name="Cavazos S.R."/>
            <person name="Ceasar H."/>
            <person name="Chacko J."/>
            <person name="Chan S.N."/>
            <person name="Chavez D."/>
            <person name="Christopoulos C."/>
            <person name="Chu J."/>
            <person name="Cockrell R."/>
            <person name="Cox C.D."/>
            <person name="Dang M."/>
            <person name="Dathorne S.R."/>
            <person name="David R."/>
            <person name="Davis C.M."/>
            <person name="Davy-Carroll L."/>
            <person name="Deshazo D.R."/>
            <person name="Donlin J.E."/>
            <person name="D'Souza L."/>
            <person name="Eaves K.A."/>
            <person name="Egan A."/>
            <person name="Emery-Cohen A.J."/>
            <person name="Escotto M."/>
            <person name="Flagg N."/>
            <person name="Forbes L.D."/>
            <person name="Gabisi A.M."/>
            <person name="Garza M."/>
            <person name="Hamilton C."/>
            <person name="Henderson N."/>
            <person name="Hernandez O."/>
            <person name="Hines S."/>
            <person name="Hogues M.E."/>
            <person name="Huang M."/>
            <person name="Idlebird D.G."/>
            <person name="Johnson R."/>
            <person name="Jolivet A."/>
            <person name="Jones S."/>
            <person name="Kagan R."/>
            <person name="King L.M."/>
            <person name="Leal B."/>
            <person name="Lebow H."/>
            <person name="Lee S."/>
            <person name="LeVan J.M."/>
            <person name="Lewis L.C."/>
            <person name="London P."/>
            <person name="Lorensuhewa L.M."/>
            <person name="Loulseged H."/>
            <person name="Lovett D.A."/>
            <person name="Lucier A."/>
            <person name="Lucier R.L."/>
            <person name="Ma J."/>
            <person name="Madu R.C."/>
            <person name="Mapua P."/>
            <person name="Martindale A.D."/>
            <person name="Martinez E."/>
            <person name="Massey E."/>
            <person name="Mawhiney S."/>
            <person name="Meador M.G."/>
            <person name="Mendez S."/>
            <person name="Mercado C."/>
            <person name="Mercado I.C."/>
            <person name="Merritt C.E."/>
            <person name="Miner Z.L."/>
            <person name="Minja E."/>
            <person name="Mitchell T."/>
            <person name="Mohabbat F."/>
            <person name="Mohabbat K."/>
            <person name="Montgomery B."/>
            <person name="Moore N."/>
            <person name="Morris S."/>
            <person name="Munidasa M."/>
            <person name="Ngo R.N."/>
            <person name="Nguyen N.B."/>
            <person name="Nickerson E."/>
            <person name="Nwaokelemeh O.O."/>
            <person name="Nwokenkwo S."/>
            <person name="Obregon M."/>
            <person name="Oguh M."/>
            <person name="Oragunye N."/>
            <person name="Oviedo R.J."/>
            <person name="Parish B.J."/>
            <person name="Parker D.N."/>
            <person name="Parrish J."/>
            <person name="Parks K.L."/>
            <person name="Paul H.A."/>
            <person name="Payton B.A."/>
            <person name="Perez A."/>
            <person name="Perrin W."/>
            <person name="Pickens A."/>
            <person name="Primus E.L."/>
            <person name="Pu L.-L."/>
            <person name="Puazo M."/>
            <person name="Quiles M.M."/>
            <person name="Quiroz J.B."/>
            <person name="Rabata D."/>
            <person name="Reeves K."/>
            <person name="Ruiz S.J."/>
            <person name="Shao H."/>
            <person name="Sisson I."/>
            <person name="Sonaike T."/>
            <person name="Sorelle R.P."/>
            <person name="Sutton A.E."/>
            <person name="Svatek A.F."/>
            <person name="Svetz L.A."/>
            <person name="Tamerisa K.S."/>
            <person name="Taylor T.R."/>
            <person name="Teague B."/>
            <person name="Thomas N."/>
            <person name="Thorn R.D."/>
            <person name="Trejos Z.Y."/>
            <person name="Trevino B.K."/>
            <person name="Ukegbu O.N."/>
            <person name="Urban J.B."/>
            <person name="Vasquez L.I."/>
            <person name="Vera V.A."/>
            <person name="Villasana D.M."/>
            <person name="Wang L."/>
            <person name="Ward-Moore S."/>
            <person name="Warren J.T."/>
            <person name="Wei X."/>
            <person name="White F."/>
            <person name="Williamson A.L."/>
            <person name="Wleczyk R."/>
            <person name="Wooden H.S."/>
            <person name="Wooden S.H."/>
            <person name="Yen J."/>
            <person name="Yoon L."/>
            <person name="Yoon V."/>
            <person name="Zorrilla S.E."/>
            <person name="Nelson D."/>
            <person name="Kucherlapati R."/>
            <person name="Weinstock G."/>
            <person name="Gibbs R.A."/>
        </authorList>
    </citation>
    <scope>NUCLEOTIDE SEQUENCE [LARGE SCALE GENOMIC DNA]</scope>
</reference>
<reference key="3">
    <citation type="journal article" date="2004" name="Genome Res.">
        <title>The status, quality, and expansion of the NIH full-length cDNA project: the Mammalian Gene Collection (MGC).</title>
        <authorList>
            <consortium name="The MGC Project Team"/>
        </authorList>
    </citation>
    <scope>NUCLEOTIDE SEQUENCE [LARGE SCALE MRNA] OF 170-801 (ISOFORM 4)</scope>
    <scope>NUCLEOTIDE SEQUENCE [LARGE SCALE MRNA] OF 212-3996 (ISOFORM 3)</scope>
    <scope>NUCLEOTIDE SEQUENCE [LARGE SCALE MRNA] OF 3257-3996 (ISOFORM 1)</scope>
    <source>
        <tissue>Brain</tissue>
        <tissue>Eye</tissue>
        <tissue>Lung</tissue>
        <tissue>Urinary bladder</tissue>
    </source>
</reference>
<reference key="4">
    <citation type="journal article" date="2004" name="Nat. Genet.">
        <title>Complete sequencing and characterization of 21,243 full-length human cDNAs.</title>
        <authorList>
            <person name="Ota T."/>
            <person name="Suzuki Y."/>
            <person name="Nishikawa T."/>
            <person name="Otsuki T."/>
            <person name="Sugiyama T."/>
            <person name="Irie R."/>
            <person name="Wakamatsu A."/>
            <person name="Hayashi K."/>
            <person name="Sato H."/>
            <person name="Nagai K."/>
            <person name="Kimura K."/>
            <person name="Makita H."/>
            <person name="Sekine M."/>
            <person name="Obayashi M."/>
            <person name="Nishi T."/>
            <person name="Shibahara T."/>
            <person name="Tanaka T."/>
            <person name="Ishii S."/>
            <person name="Yamamoto J."/>
            <person name="Saito K."/>
            <person name="Kawai Y."/>
            <person name="Isono Y."/>
            <person name="Nakamura Y."/>
            <person name="Nagahari K."/>
            <person name="Murakami K."/>
            <person name="Yasuda T."/>
            <person name="Iwayanagi T."/>
            <person name="Wagatsuma M."/>
            <person name="Shiratori A."/>
            <person name="Sudo H."/>
            <person name="Hosoiri T."/>
            <person name="Kaku Y."/>
            <person name="Kodaira H."/>
            <person name="Kondo H."/>
            <person name="Sugawara M."/>
            <person name="Takahashi M."/>
            <person name="Kanda K."/>
            <person name="Yokoi T."/>
            <person name="Furuya T."/>
            <person name="Kikkawa E."/>
            <person name="Omura Y."/>
            <person name="Abe K."/>
            <person name="Kamihara K."/>
            <person name="Katsuta N."/>
            <person name="Sato K."/>
            <person name="Tanikawa M."/>
            <person name="Yamazaki M."/>
            <person name="Ninomiya K."/>
            <person name="Ishibashi T."/>
            <person name="Yamashita H."/>
            <person name="Murakawa K."/>
            <person name="Fujimori K."/>
            <person name="Tanai H."/>
            <person name="Kimata M."/>
            <person name="Watanabe M."/>
            <person name="Hiraoka S."/>
            <person name="Chiba Y."/>
            <person name="Ishida S."/>
            <person name="Ono Y."/>
            <person name="Takiguchi S."/>
            <person name="Watanabe S."/>
            <person name="Yosida M."/>
            <person name="Hotuta T."/>
            <person name="Kusano J."/>
            <person name="Kanehori K."/>
            <person name="Takahashi-Fujii A."/>
            <person name="Hara H."/>
            <person name="Tanase T.-O."/>
            <person name="Nomura Y."/>
            <person name="Togiya S."/>
            <person name="Komai F."/>
            <person name="Hara R."/>
            <person name="Takeuchi K."/>
            <person name="Arita M."/>
            <person name="Imose N."/>
            <person name="Musashino K."/>
            <person name="Yuuki H."/>
            <person name="Oshima A."/>
            <person name="Sasaki N."/>
            <person name="Aotsuka S."/>
            <person name="Yoshikawa Y."/>
            <person name="Matsunawa H."/>
            <person name="Ichihara T."/>
            <person name="Shiohata N."/>
            <person name="Sano S."/>
            <person name="Moriya S."/>
            <person name="Momiyama H."/>
            <person name="Satoh N."/>
            <person name="Takami S."/>
            <person name="Terashima Y."/>
            <person name="Suzuki O."/>
            <person name="Nakagawa S."/>
            <person name="Senoh A."/>
            <person name="Mizoguchi H."/>
            <person name="Goto Y."/>
            <person name="Shimizu F."/>
            <person name="Wakebe H."/>
            <person name="Hishigaki H."/>
            <person name="Watanabe T."/>
            <person name="Sugiyama A."/>
            <person name="Takemoto M."/>
            <person name="Kawakami B."/>
            <person name="Yamazaki M."/>
            <person name="Watanabe K."/>
            <person name="Kumagai A."/>
            <person name="Itakura S."/>
            <person name="Fukuzumi Y."/>
            <person name="Fujimori Y."/>
            <person name="Komiyama M."/>
            <person name="Tashiro H."/>
            <person name="Tanigami A."/>
            <person name="Fujiwara T."/>
            <person name="Ono T."/>
            <person name="Yamada K."/>
            <person name="Fujii Y."/>
            <person name="Ozaki K."/>
            <person name="Hirao M."/>
            <person name="Ohmori Y."/>
            <person name="Kawabata A."/>
            <person name="Hikiji T."/>
            <person name="Kobatake N."/>
            <person name="Inagaki H."/>
            <person name="Ikema Y."/>
            <person name="Okamoto S."/>
            <person name="Okitani R."/>
            <person name="Kawakami T."/>
            <person name="Noguchi S."/>
            <person name="Itoh T."/>
            <person name="Shigeta K."/>
            <person name="Senba T."/>
            <person name="Matsumura K."/>
            <person name="Nakajima Y."/>
            <person name="Mizuno T."/>
            <person name="Morinaga M."/>
            <person name="Sasaki M."/>
            <person name="Togashi T."/>
            <person name="Oyama M."/>
            <person name="Hata H."/>
            <person name="Watanabe M."/>
            <person name="Komatsu T."/>
            <person name="Mizushima-Sugano J."/>
            <person name="Satoh T."/>
            <person name="Shirai Y."/>
            <person name="Takahashi Y."/>
            <person name="Nakagawa K."/>
            <person name="Okumura K."/>
            <person name="Nagase T."/>
            <person name="Nomura N."/>
            <person name="Kikuchi H."/>
            <person name="Masuho Y."/>
            <person name="Yamashita R."/>
            <person name="Nakai K."/>
            <person name="Yada T."/>
            <person name="Nakamura Y."/>
            <person name="Ohara O."/>
            <person name="Isogai T."/>
            <person name="Sugano S."/>
        </authorList>
    </citation>
    <scope>NUCLEOTIDE SEQUENCE [LARGE SCALE MRNA] OF 184-3996 (ISOFORM 3)</scope>
    <scope>NUCLEOTIDE SEQUENCE [LARGE SCALE MRNA] OF 1835-3996 (ISOFORM 2)</scope>
    <source>
        <tissue>Brain</tissue>
        <tissue>Glial tumor</tissue>
    </source>
</reference>
<reference key="5">
    <citation type="journal article" date="1998" name="DNA Res.">
        <title>Prediction of the coding sequences of unidentified human genes. X. The complete sequences of 100 new cDNA clones from brain which can code for large proteins in vitro.</title>
        <authorList>
            <person name="Ishikawa K."/>
            <person name="Nagase T."/>
            <person name="Suyama M."/>
            <person name="Miyajima N."/>
            <person name="Tanaka A."/>
            <person name="Kotani H."/>
            <person name="Nomura N."/>
            <person name="Ohara O."/>
        </authorList>
    </citation>
    <scope>NUCLEOTIDE SEQUENCE [LARGE SCALE MRNA] OF 995-3996 (ISOFORM 1)</scope>
    <source>
        <tissue>Brain</tissue>
    </source>
</reference>
<reference key="6">
    <citation type="journal article" date="2002" name="DNA Res.">
        <title>Construction of expression-ready cDNA clones for KIAA genes: manual curation of 330 KIAA cDNA clones.</title>
        <authorList>
            <person name="Nakajima D."/>
            <person name="Okazaki N."/>
            <person name="Yamakawa H."/>
            <person name="Kikuno R."/>
            <person name="Ohara O."/>
            <person name="Nagase T."/>
        </authorList>
    </citation>
    <scope>SEQUENCE REVISION</scope>
</reference>
<reference key="7">
    <citation type="submission" date="1999-07" db="EMBL/GenBank/DDBJ databases">
        <title>Human GR AF-1 specific protein phosphatase.</title>
        <authorList>
            <person name="Govindan M.V."/>
            <person name="Warriar N."/>
        </authorList>
    </citation>
    <scope>NUCLEOTIDE SEQUENCE [MRNA] OF 2620-3996 (ISOFORM 1)</scope>
    <source>
        <tissue>Placenta</tissue>
    </source>
</reference>
<reference key="8">
    <citation type="journal article" date="2007" name="BMC Genomics">
        <title>The full-ORF clone resource of the German cDNA consortium.</title>
        <authorList>
            <person name="Bechtel S."/>
            <person name="Rosenfelder H."/>
            <person name="Duda A."/>
            <person name="Schmidt C.P."/>
            <person name="Ernst U."/>
            <person name="Wellenreuther R."/>
            <person name="Mehrle A."/>
            <person name="Schuster C."/>
            <person name="Bahr A."/>
            <person name="Bloecker H."/>
            <person name="Heubner D."/>
            <person name="Hoerlein A."/>
            <person name="Michel G."/>
            <person name="Wedler H."/>
            <person name="Koehrer K."/>
            <person name="Ottenwaelder B."/>
            <person name="Poustka A."/>
            <person name="Wiemann S."/>
            <person name="Schupp I."/>
        </authorList>
    </citation>
    <scope>NUCLEOTIDE SEQUENCE [LARGE SCALE MRNA] OF 3881-3996 (ISOFORM 1)</scope>
    <source>
        <tissue>Uterus</tissue>
    </source>
</reference>
<reference key="9">
    <citation type="journal article" date="2008" name="Proc. Natl. Acad. Sci. U.S.A.">
        <title>A quantitative atlas of mitotic phosphorylation.</title>
        <authorList>
            <person name="Dephoure N."/>
            <person name="Zhou C."/>
            <person name="Villen J."/>
            <person name="Beausoleil S.A."/>
            <person name="Bakalarski C.E."/>
            <person name="Elledge S.J."/>
            <person name="Gygi S.P."/>
        </authorList>
    </citation>
    <scope>IDENTIFICATION BY MASS SPECTROMETRY [LARGE SCALE ANALYSIS]</scope>
    <source>
        <tissue>Cervix carcinoma</tissue>
    </source>
</reference>
<reference key="10">
    <citation type="journal article" date="2009" name="Sci. Signal.">
        <title>Quantitative phosphoproteomic analysis of T cell receptor signaling reveals system-wide modulation of protein-protein interactions.</title>
        <authorList>
            <person name="Mayya V."/>
            <person name="Lundgren D.H."/>
            <person name="Hwang S.-I."/>
            <person name="Rezaul K."/>
            <person name="Wu L."/>
            <person name="Eng J.K."/>
            <person name="Rodionov V."/>
            <person name="Han D.K."/>
        </authorList>
    </citation>
    <scope>IDENTIFICATION BY MASS SPECTROMETRY [LARGE SCALE ANALYSIS]</scope>
    <source>
        <tissue>Leukemic T-cell</tissue>
    </source>
</reference>
<reference key="11">
    <citation type="journal article" date="2013" name="J. Proteome Res.">
        <title>Toward a comprehensive characterization of a human cancer cell phosphoproteome.</title>
        <authorList>
            <person name="Zhou H."/>
            <person name="Di Palma S."/>
            <person name="Preisinger C."/>
            <person name="Peng M."/>
            <person name="Polat A.N."/>
            <person name="Heck A.J."/>
            <person name="Mohammed S."/>
        </authorList>
    </citation>
    <scope>PHOSPHORYLATION [LARGE SCALE ANALYSIS] AT THR-2080</scope>
    <scope>IDENTIFICATION BY MASS SPECTROMETRY [LARGE SCALE ANALYSIS]</scope>
    <source>
        <tissue>Cervix carcinoma</tissue>
        <tissue>Erythroleukemia</tissue>
    </source>
</reference>
<reference key="12">
    <citation type="journal article" date="2014" name="J. Proteomics">
        <title>An enzyme assisted RP-RPLC approach for in-depth analysis of human liver phosphoproteome.</title>
        <authorList>
            <person name="Bian Y."/>
            <person name="Song C."/>
            <person name="Cheng K."/>
            <person name="Dong M."/>
            <person name="Wang F."/>
            <person name="Huang J."/>
            <person name="Sun D."/>
            <person name="Wang L."/>
            <person name="Ye M."/>
            <person name="Zou H."/>
        </authorList>
    </citation>
    <scope>IDENTIFICATION BY MASS SPECTROMETRY [LARGE SCALE ANALYSIS]</scope>
    <source>
        <tissue>Liver</tissue>
    </source>
</reference>
<reference key="13">
    <citation type="journal article" date="2023" name="Genet. Med.">
        <title>Biallelic variants in HECT E3 paralogs, HECTD4 and UBE3C, encoding ubiquitin ligases cause neurodevelopmental disorders that overlap with Angelman syndrome.</title>
        <authorList>
            <person name="Faqeih E.A."/>
            <person name="Alghamdi M.A."/>
            <person name="Almahroos M.A."/>
            <person name="Alharby E."/>
            <person name="Almuntashri M."/>
            <person name="Alshangiti A.M."/>
            <person name="Clement P."/>
            <person name="Calame D.G."/>
            <person name="Qebibo L."/>
            <person name="Burglen L."/>
            <person name="Doco-Fenzy M."/>
            <person name="Mastrangelo M."/>
            <person name="Torella A."/>
            <person name="Manti F."/>
            <person name="Nigro V."/>
            <person name="Alban Z."/>
            <person name="Alharbi G.S."/>
            <person name="Hashmi J.A."/>
            <person name="Alraddadi R."/>
            <person name="Alamri R."/>
            <person name="Mitani T."/>
            <person name="Magalie B."/>
            <person name="Coban-Akdemir Z."/>
            <person name="Geckinli B.B."/>
            <person name="Pehlivan D."/>
            <person name="Romito A."/>
            <person name="Karageorgou V."/>
            <person name="Martini J."/>
            <person name="Colin E."/>
            <person name="Bonneau D."/>
            <person name="Bertoli-Avella A."/>
            <person name="Lupski J.R."/>
            <person name="Pastore A."/>
            <person name="Peake R.W.A."/>
            <person name="Dallol A."/>
            <person name="Alfadhel M."/>
            <person name="Almontashiri N.A.M."/>
        </authorList>
    </citation>
    <scope>INVOLVEMENT IN NEDSSCC</scope>
    <scope>VARIANTS NEDSSCC 312-ARG--GLY-3996 DEL; TRP-1203; 1701-GLN--GLY-3996 DEL; ARG-1843; TYR-2985 AND MET-3566</scope>
</reference>
<comment type="function">
    <text evidence="1">E3 ubiquitin-protein ligase which accepts ubiquitin from an E2 ubiquitin-conjugating enzyme in the form of a thioester and then directly transfers the ubiquitin to targeted substrates.</text>
</comment>
<comment type="catalytic activity">
    <reaction>
        <text>S-ubiquitinyl-[E2 ubiquitin-conjugating enzyme]-L-cysteine + [acceptor protein]-L-lysine = [E2 ubiquitin-conjugating enzyme]-L-cysteine + N(6)-ubiquitinyl-[acceptor protein]-L-lysine.</text>
        <dbReference type="EC" id="2.3.2.26"/>
    </reaction>
</comment>
<comment type="pathway">
    <text>Protein modification; protein ubiquitination.</text>
</comment>
<comment type="interaction">
    <interactant intactId="EBI-7195436">
        <id>Q9Y4D8</id>
    </interactant>
    <interactant intactId="EBI-347088">
        <id>P63104</id>
        <label>YWHAZ</label>
    </interactant>
    <organismsDiffer>false</organismsDiffer>
    <experiments>2</experiments>
</comment>
<comment type="subcellular location">
    <subcellularLocation>
        <location evidence="9">Membrane</location>
        <topology evidence="9">Single-pass membrane protein</topology>
    </subcellularLocation>
</comment>
<comment type="alternative products">
    <event type="alternative splicing"/>
    <isoform>
        <id>Q9Y4D8-1</id>
        <name>1</name>
        <sequence type="displayed"/>
    </isoform>
    <isoform>
        <id>Q9Y4D8-2</id>
        <name>2</name>
        <sequence type="described" ref="VSP_034529 VSP_034530"/>
    </isoform>
    <isoform>
        <id>Q9Y4D8-3</id>
        <name>3</name>
        <sequence type="described" ref="VSP_039452 VSP_039453 VSP_039454"/>
    </isoform>
    <isoform>
        <id>Q9Y4D8-4</id>
        <name>4</name>
        <sequence type="described" ref="VSP_039451 VSP_039452"/>
    </isoform>
    <isoform>
        <id>Q9Y4D8-5</id>
        <name>5</name>
        <name>POTAGE</name>
        <sequence type="described" ref="VSP_047465 VSP_047466 VSP_039452 VSP_039453 VSP_039454"/>
    </isoform>
</comment>
<comment type="disease" evidence="5">
    <disease id="DI-06623">
        <name>Neurodevelopmental disorder with seizures, spasticity, and complete or partial agenesis of the corpus callosum</name>
        <acronym>NEDSSCC</acronym>
        <description>An autosomal recessive neurodevelopmental disorder characterized by global developmental delay, hypotonia, and seizures. Other features include peripheral spasticity with hyperreflexia, variable dysmorphic features, impaired intellectual development, behavioral abnormalities, and hypoplasia or absence of the corpus callosum on brain imaging.</description>
        <dbReference type="MIM" id="620250"/>
    </disease>
    <text>The disease is caused by variants affecting the gene represented in this entry.</text>
</comment>
<comment type="sequence caution" evidence="9">
    <conflict type="miscellaneous discrepancy">
        <sequence resource="EMBL-CDS" id="AAF36539"/>
    </conflict>
    <text>Contaminating sequence. Sequence of unknown origin in the N-terminal part.</text>
</comment>
<comment type="sequence caution" evidence="9">
    <conflict type="erroneous initiation">
        <sequence resource="EMBL-CDS" id="AAH65706"/>
    </conflict>
    <text>Truncated N-terminus.</text>
</comment>
<comment type="sequence caution" evidence="9">
    <conflict type="miscellaneous discrepancy">
        <sequence resource="EMBL-CDS" id="AAH65706"/>
    </conflict>
    <text>Contaminating sequence. Potential poly-A sequence.</text>
</comment>
<comment type="sequence caution" evidence="9">
    <conflict type="erroneous initiation">
        <sequence resource="EMBL-CDS" id="AAI01483"/>
    </conflict>
    <text>Truncated N-terminus.</text>
</comment>
<comment type="sequence caution" evidence="9">
    <conflict type="miscellaneous discrepancy">
        <sequence resource="EMBL-CDS" id="BAA31589"/>
    </conflict>
    <text>Contaminating sequence. Sequence of unknown origin in the N-terminal part.</text>
</comment>
<comment type="sequence caution" evidence="9">
    <conflict type="erroneous initiation">
        <sequence resource="EMBL-CDS" id="BAC03671"/>
    </conflict>
    <text>Truncated N-terminus.</text>
</comment>
<sequence>MPANHLPIGSTMSTVHLSSDGTYFYWIWSPASLNEKTPKGHSVFMDIFELVVENGVFVANPLQERTILMRKEGESAKSINEMLLSRLSRYRASPSATLAALTGSTISNTLKEDQAANTSCGLPLKMLRKTPIYTCGTYLVMLVPPPGGSGSSATRSLFGGTSGLSSLKRACYDTVNNMLWTCSNDYIDQWCNPGNQAFHYVCQRLGVSHIITEPKEEAITTNEVINQLLHHVGAMCIHQLNLLATNPNLPITSVLGKQHPIEAHHLSSICDIMEKAMVNGDTCIIRCILVVFQVVFKFFFSPQTERNRDIIRRSGLLLWQLLMAPKDQICPEIQKEVCLAISSGLNILYPGETEINNLLKLVLTEGERNSGLSQLRDVILTNLAEQLQNNRFGSDEDDHYRLNDELLHYILKIVVRESCILITKCQTVSKDDFQKLLSTVPAASSCLRYLMAVQNHLLSNTILIKPDENDDSDSSLQGETLKVQELKVSILALATQILTGCDEVLEMLQQVTTALINSDIADREQRLKGLEQVTKATMLGHLLPVLLTSLMHPNLQTLIMADALMPQLVQLVLYTSQTALLLKTQCPVFAEVGCSPCGAPDQKCRLFPDERMLEEKEEPGFLTGLKIPAPWAAGKTVETVHPVRDNYKFKETVHIPGARCLYLRFDSRCSSQYDYDKLVIYAGPNTNSRKVAEYGGNTLGYGSRSVLGTGWPKDLVKCISPPSLNFKVEGDTVTFSFEMRSGREHNTPDKAMWGFACTVRAQESSEDVSGGLPFLVDLALGLSVLACSMLRILYNGPEITKEEEACQELLRSKLLQRCQWQVEANGVISPALTPSPSPLPLTIEEDREFTYPSDVLVPPVGNYFDLPRIRLPPGIMIKLREISGRARPQFRPSIKEVIQPDVMEEMVVSCVIKHLNLVDALQSLINFQYQEEHAEEYDLLCKIMGETFKKLNAMERQLQSVAELEQKWQSEVDDAMQGKLENNMPFFYDYHFNENKMKELELLCSMKEVSFDGNDLENMVLSLREKFLQEVNSLIQKPSHPLAKTKTLVKSLMNRAELLLHVTIAAQSGLTRSISGTPAETPACKSASETKVISHAVRQPVFLRSMSAPSDLEMIGNEDLEFTRANQRRRHVTSHRSSSFTLLQSLAIEDSRDKPTYSVLLGQLFAFIGTNPDQAVSSSSFLLAAQTRWRRGNTRKQALVHMRELLTAAVRVGGVTHLVGPVTMVLQGGPRIEELTCGGMVEQVQEAFGETMTSVVSLCARYPIACANSIGLLCTIPYTRSEEKCLVRSGLVQLMDRLCSLSNQTESSSSEKQTKKQKVATMAWAAFQVLANRCVEWEKEEGGSTEAVHSGLARQVSSLLTNHLARATECCGNQAAGNDALQDVLSLLNDLSRSHIGKAILSQPACVSKLLSLLLDQRPSPKLVLIILQLCRAALPLMSVEDCGNVELPPWSYSVPSLNSEQEDPSDPASKIASLLLAKLADYVVPGCQTVLSPTASEPDTTLTKTSPKNSLKGDKDPGEESEAVDGKLSIFIHKREDQSSHEVLQPLLSSSEGRPFRLGTGANMEKVVKMDRDMTKGGCCEVITEEAAAALRKATKWAQSGLIVSIGPPVESINPETVSGLSTGDKKKTAQTSICRERNSELARTDPVRPFISGHVANSMAAEVIALLHSLLMAPESNAAQIWTTTAEKVLSRALMYIPQLGKYAESILENGSSSGRKLAKLQRIARQAVAALCALGGFKETIKIGSEVQVLGRGISGSIGVVASINEQEGIATVRFPPIDCRKTSQASDTLTIPLSRLCVPRSEALPLHKLSITEKVVQAVQSMLLPQEGSLSIHTSLPATGDGSAPVMAVVRLLAEIRTRACLVMAQLLEDSLFCEEFIQQCPAAVEVLNLVAQECSAGERLAVVEVQCERLRMLYRDCARPPPPPLQADRRQPKEITWSPSRVFPPVRACMFSSHLTSVTFLADPSAGGGLPRGTFIYATSPLPVQAPSFYWEIEIVSYGDTDDDTGPIVSFGFTTEAEKRDGAWTNPVGTCLFHNNGRAVHYNGSSLLQWKSVRLDVTLSPGDVAGIGWERTEGTPPPPGQPAKGRVYFTYCGQRLSPYLEDVSGGMWPVVHIQKKNTKTRANFGSRPFAYAEGQAHRNAADLCTDLAEEISANFEALPFAMASDSDNDAGTSIASDPGTHGPPCRIAAVATAQQQYDSDTSCHYKVELSYENFITSGPDPHPPPIADDESDDDDDDDIPQEDHYALLVKAWETKVFPTIRRRFRNEAERKSGLDQIKGALQLGMVDIARQTVEFLYEENGGIPRDLYLPTIEDIKDEANKFTIDKVRKGLTVVTRSPDSNNVASSAVGTALPKFAIRGMLKTFGLHGVVLDVDSVNELVQVETYLRSEGVLVRYWYPIDMLERPPAGYRRTATNGLVTLDNTNLQIHRELLRCEAALARLYCRMALLNIFAPKLPHLFTRLFHIPAIRDITLEHLQLLSNQLLAPPLPDGTISSSSILLAQSLQHCIHSQNCSATDLFYQGNSQTVREWLNVAITRTLHQGEESLLELTKQICSFLQTAPEQFPSEEFPISESKVNMDVNFPGAAFVVVSCKESQSGFRKDSSLYKAPWARVLVYGLGHKVKRNGQLNLIEAACYPRDASPANTGLAPPPTADQYPSVVLSTDRVHIKLGVSPPPGAVLVLHSLPLEFPLAMAFAEQLLSWKSEDSEGKSEDEPDTIPTSVLLQVVELLGNFLWTTDMAACVKELVFHLLAELLRTVHTLEQRRHPAGLSSSIALQLNPCLAMLMALQSELHKLYDEETQNWVSGGACGGSGGAAAGDQGRFSTYFHALMEGCLAVAEVTLPTNMSVTASGVTSATAPNLSDSSSSSSSSPGQTPQSPSLLSKRKKVKMKREKASSSGKRQSSRTVDSDPTVLSIGGSKPEDMLWFHRALTLLIILRHLTRKDPQGLGVTSDAIADACQALVGPTAHSRLLVISGIPTHLDEGVVRGAIRKACNAHGGVFKDEIYIPLQEEDTKKPKDKAEGGDGKVEPEKTLAFPGTDSMEVSTSSSLTPAMSISASASTSQASICSSQGISQTVSDLSVDPLPAGLELPIPPGLLEPHAVSSQESLDISLCSTGSLGSLGSLGEPLDNAETASVSDMGSMYTVTSLDNQPLAARPIKGFAVVEIRSRAKIEKIRASLFNNNDLIGLSSLDGEDELMEMSTEEILTVSVVNQSLFDTQGSPGLEDYFNDKSIKGEKLVPGAREVLTEIFKSCAHSEQTLSLTPAKPIRVSDIYLSKEQINSQTPGNLLHLFFTNVRPPKKVLEDQLTQILRKYGVPKPKFDKSKYSKAGKEQHPVKVVSTKRPITKPPAKDKAVLNSVSRTALSEKKPTVKPKSPEKSKPDEKDPEKSPTKKQEVPEEKYLTLEGFHKFVIDRARQDIRSVWRAILSCGYDLHFERCACIDVRHAQKASRKWTLEMDVALVQYINQLCRHLAITPARLHPHEVYLDPADAADPRVACLLNVPIESLRLRFALLQSLNTTLETFFLPLVELRQTPMYTHSIAALLKEAKGLIFYDTKVTVMNRVLNATVQRTADHAAPEITLDPLEIVGGEIRASENSYFCQAARQLASVPSSQLCVKLASGGDPTYAFNIRFTGEEVHGTSGSFRHFLWQVCKELQSSSLSLLLLCPSSAVNKNKGKYILTPSPITYGEEQLLHFLGQLLGIAIRADVPLPLDLLPSFWKTLVGEPLDPEQDLQEADILTYNYVKKFESINDETELEALCAEIASQHLATESPDSPNKPCCRFTYLTMTGEEVELCSRGRHILVAWENKDIYAAAIRSLRLRELQNVECVTAVRAGLGSIIPLQLLTMLSPLEMELRTCGLPYINLEFLKAHTMYQVGLMETDQHIEFFWGALEMFTQEELCKFIKFACNQERIPFTCPCKDGGPDTAHVPPYPMKIAPPDGTAGSPDSRYIRVETCMFMIKLPQYSSLEIMLEKLRCAIHYREDPLSG</sequence>
<keyword id="KW-0025">Alternative splicing</keyword>
<keyword id="KW-0225">Disease variant</keyword>
<keyword id="KW-0991">Intellectual disability</keyword>
<keyword id="KW-0472">Membrane</keyword>
<keyword id="KW-0597">Phosphoprotein</keyword>
<keyword id="KW-1267">Proteomics identification</keyword>
<keyword id="KW-1185">Reference proteome</keyword>
<keyword id="KW-0808">Transferase</keyword>
<keyword id="KW-0812">Transmembrane</keyword>
<keyword id="KW-1133">Transmembrane helix</keyword>
<keyword id="KW-0833">Ubl conjugation pathway</keyword>
<evidence type="ECO:0000250" key="1"/>
<evidence type="ECO:0000255" key="2"/>
<evidence type="ECO:0000255" key="3">
    <source>
        <dbReference type="PROSITE-ProRule" id="PRU00104"/>
    </source>
</evidence>
<evidence type="ECO:0000256" key="4">
    <source>
        <dbReference type="SAM" id="MobiDB-lite"/>
    </source>
</evidence>
<evidence type="ECO:0000269" key="5">
    <source>
    </source>
</evidence>
<evidence type="ECO:0000303" key="6">
    <source>
    </source>
</evidence>
<evidence type="ECO:0000303" key="7">
    <source>
    </source>
</evidence>
<evidence type="ECO:0000303" key="8">
    <source>
    </source>
</evidence>
<evidence type="ECO:0000305" key="9"/>
<evidence type="ECO:0007744" key="10">
    <source>
    </source>
</evidence>
<gene>
    <name type="primary">HECTD4</name>
    <name type="synonym">C12orf51</name>
    <name type="synonym">KIAA0614</name>
</gene>
<proteinExistence type="evidence at protein level"/>
<dbReference type="EC" id="2.3.2.26"/>
<dbReference type="EMBL" id="AB777655">
    <property type="protein sequence ID" value="BAM76724.1"/>
    <property type="molecule type" value="mRNA"/>
</dbReference>
<dbReference type="EMBL" id="AC073575">
    <property type="status" value="NOT_ANNOTATED_CDS"/>
    <property type="molecule type" value="Genomic_DNA"/>
</dbReference>
<dbReference type="EMBL" id="AC004031">
    <property type="status" value="NOT_ANNOTATED_CDS"/>
    <property type="molecule type" value="Genomic_DNA"/>
</dbReference>
<dbReference type="EMBL" id="AC004217">
    <property type="status" value="NOT_ANNOTATED_CDS"/>
    <property type="molecule type" value="Genomic_DNA"/>
</dbReference>
<dbReference type="EMBL" id="BC006270">
    <property type="protein sequence ID" value="AAH06270.2"/>
    <property type="molecule type" value="mRNA"/>
</dbReference>
<dbReference type="EMBL" id="BC021144">
    <property type="protein sequence ID" value="AAH21144.1"/>
    <property type="molecule type" value="mRNA"/>
</dbReference>
<dbReference type="EMBL" id="BC065706">
    <property type="protein sequence ID" value="AAH65706.1"/>
    <property type="status" value="ALT_SEQ"/>
    <property type="molecule type" value="mRNA"/>
</dbReference>
<dbReference type="EMBL" id="BC101482">
    <property type="protein sequence ID" value="AAI01483.1"/>
    <property type="status" value="ALT_INIT"/>
    <property type="molecule type" value="mRNA"/>
</dbReference>
<dbReference type="EMBL" id="AK054654">
    <property type="status" value="NOT_ANNOTATED_CDS"/>
    <property type="molecule type" value="mRNA"/>
</dbReference>
<dbReference type="EMBL" id="AK091473">
    <property type="protein sequence ID" value="BAC03671.1"/>
    <property type="status" value="ALT_INIT"/>
    <property type="molecule type" value="mRNA"/>
</dbReference>
<dbReference type="EMBL" id="AB014514">
    <property type="protein sequence ID" value="BAA31589.3"/>
    <property type="status" value="ALT_SEQ"/>
    <property type="molecule type" value="mRNA"/>
</dbReference>
<dbReference type="EMBL" id="AF174498">
    <property type="protein sequence ID" value="AAF36539.1"/>
    <property type="status" value="ALT_SEQ"/>
    <property type="molecule type" value="mRNA"/>
</dbReference>
<dbReference type="EMBL" id="AL117469">
    <property type="protein sequence ID" value="CAB55944.1"/>
    <property type="molecule type" value="mRNA"/>
</dbReference>
<dbReference type="PIR" id="T00390">
    <property type="entry name" value="T00390"/>
</dbReference>
<dbReference type="FunCoup" id="Q9Y4D8">
    <property type="interactions" value="513"/>
</dbReference>
<dbReference type="IntAct" id="Q9Y4D8">
    <property type="interactions" value="17"/>
</dbReference>
<dbReference type="MINT" id="Q9Y4D8"/>
<dbReference type="STRING" id="9606.ENSP00000366783"/>
<dbReference type="GlyGen" id="Q9Y4D8">
    <property type="glycosylation" value="4 sites, 1 N-linked glycan (1 site), 1 O-linked glycan (1 site)"/>
</dbReference>
<dbReference type="iPTMnet" id="Q9Y4D8"/>
<dbReference type="PhosphoSitePlus" id="Q9Y4D8"/>
<dbReference type="SwissPalm" id="Q9Y4D8"/>
<dbReference type="BioMuta" id="HECTD4"/>
<dbReference type="DMDM" id="300669718"/>
<dbReference type="jPOST" id="Q9Y4D8"/>
<dbReference type="MassIVE" id="Q9Y4D8"/>
<dbReference type="PaxDb" id="9606-ENSP00000449784"/>
<dbReference type="PeptideAtlas" id="Q9Y4D8"/>
<dbReference type="ProteomicsDB" id="86170">
    <molecule id="Q9Y4D8-1"/>
</dbReference>
<dbReference type="ProteomicsDB" id="86171">
    <molecule id="Q9Y4D8-2"/>
</dbReference>
<dbReference type="ProteomicsDB" id="86172">
    <molecule id="Q9Y4D8-3"/>
</dbReference>
<dbReference type="ProteomicsDB" id="86173">
    <molecule id="Q9Y4D8-4"/>
</dbReference>
<dbReference type="Pumba" id="Q9Y4D8"/>
<dbReference type="AGR" id="HGNC:26611"/>
<dbReference type="GeneCards" id="HECTD4"/>
<dbReference type="HGNC" id="HGNC:26611">
    <property type="gene designation" value="HECTD4"/>
</dbReference>
<dbReference type="MalaCards" id="HECTD4"/>
<dbReference type="MIM" id="620209">
    <property type="type" value="gene"/>
</dbReference>
<dbReference type="MIM" id="620250">
    <property type="type" value="phenotype"/>
</dbReference>
<dbReference type="neXtProt" id="NX_Q9Y4D8"/>
<dbReference type="eggNOG" id="KOG1426">
    <property type="taxonomic scope" value="Eukaryota"/>
</dbReference>
<dbReference type="InParanoid" id="Q9Y4D8"/>
<dbReference type="OrthoDB" id="5986060at2759"/>
<dbReference type="PAN-GO" id="Q9Y4D8">
    <property type="GO annotations" value="1 GO annotation based on evolutionary models"/>
</dbReference>
<dbReference type="PhylomeDB" id="Q9Y4D8"/>
<dbReference type="PathwayCommons" id="Q9Y4D8"/>
<dbReference type="SignaLink" id="Q9Y4D8"/>
<dbReference type="SIGNOR" id="Q9Y4D8"/>
<dbReference type="UniPathway" id="UPA00143"/>
<dbReference type="ChiTaRS" id="HECTD4">
    <property type="organism name" value="human"/>
</dbReference>
<dbReference type="Pharos" id="Q9Y4D8">
    <property type="development level" value="Tbio"/>
</dbReference>
<dbReference type="PRO" id="PR:Q9Y4D8"/>
<dbReference type="Proteomes" id="UP000005640">
    <property type="component" value="Unplaced"/>
</dbReference>
<dbReference type="RNAct" id="Q9Y4D8">
    <property type="molecule type" value="protein"/>
</dbReference>
<dbReference type="GO" id="GO:0016020">
    <property type="term" value="C:membrane"/>
    <property type="evidence" value="ECO:0007669"/>
    <property type="project" value="UniProtKB-SubCell"/>
</dbReference>
<dbReference type="GO" id="GO:0004842">
    <property type="term" value="F:ubiquitin-protein transferase activity"/>
    <property type="evidence" value="ECO:0007669"/>
    <property type="project" value="InterPro"/>
</dbReference>
<dbReference type="GO" id="GO:0042593">
    <property type="term" value="P:glucose homeostasis"/>
    <property type="evidence" value="ECO:0000315"/>
    <property type="project" value="UniProtKB"/>
</dbReference>
<dbReference type="GO" id="GO:0006006">
    <property type="term" value="P:glucose metabolic process"/>
    <property type="evidence" value="ECO:0000315"/>
    <property type="project" value="UniProtKB"/>
</dbReference>
<dbReference type="GO" id="GO:0016567">
    <property type="term" value="P:protein ubiquitination"/>
    <property type="evidence" value="ECO:0007669"/>
    <property type="project" value="UniProtKB-UniPathway"/>
</dbReference>
<dbReference type="CDD" id="cd00078">
    <property type="entry name" value="HECTc"/>
    <property type="match status" value="1"/>
</dbReference>
<dbReference type="CDD" id="cd13735">
    <property type="entry name" value="SPRY_HECT_like"/>
    <property type="match status" value="1"/>
</dbReference>
<dbReference type="FunFam" id="3.30.2410.10:FF:000015">
    <property type="entry name" value="probable E3 ubiquitin-protein ligase HECTD4 isoform X1"/>
    <property type="match status" value="1"/>
</dbReference>
<dbReference type="FunFam" id="3.90.1750.10:FF:000022">
    <property type="entry name" value="probable E3 ubiquitin-protein ligase HECTD4 isoform X1"/>
    <property type="match status" value="1"/>
</dbReference>
<dbReference type="FunFam" id="2.60.120.920:FF:000030">
    <property type="entry name" value="probable E3 ubiquitin-protein ligase HECTD4 isoform X2"/>
    <property type="match status" value="1"/>
</dbReference>
<dbReference type="FunFam" id="3.30.2160.10:FF:000012">
    <property type="entry name" value="probable E3 ubiquitin-protein ligase HECTD4 isoform X2"/>
    <property type="match status" value="1"/>
</dbReference>
<dbReference type="Gene3D" id="2.60.120.920">
    <property type="match status" value="1"/>
</dbReference>
<dbReference type="Gene3D" id="3.30.2160.10">
    <property type="entry name" value="Hect, E3 ligase catalytic domain"/>
    <property type="match status" value="1"/>
</dbReference>
<dbReference type="Gene3D" id="3.30.2410.10">
    <property type="entry name" value="Hect, E3 ligase catalytic domain"/>
    <property type="match status" value="1"/>
</dbReference>
<dbReference type="Gene3D" id="3.90.1750.10">
    <property type="entry name" value="Hect, E3 ligase catalytic domains"/>
    <property type="match status" value="1"/>
</dbReference>
<dbReference type="InterPro" id="IPR043136">
    <property type="entry name" value="B30.2/SPRY_sf"/>
</dbReference>
<dbReference type="InterPro" id="IPR000569">
    <property type="entry name" value="HECT_dom"/>
</dbReference>
<dbReference type="InterPro" id="IPR035983">
    <property type="entry name" value="Hect_E3_ubiquitin_ligase"/>
</dbReference>
<dbReference type="InterPro" id="IPR043366">
    <property type="entry name" value="HECTD4"/>
</dbReference>
<dbReference type="InterPro" id="IPR035781">
    <property type="entry name" value="SPRY_HECTD4"/>
</dbReference>
<dbReference type="PANTHER" id="PTHR46435">
    <property type="entry name" value="E3 UBIQUITIN-PROTEIN LIGASE HECTD4-RELATED"/>
    <property type="match status" value="1"/>
</dbReference>
<dbReference type="PANTHER" id="PTHR46435:SF1">
    <property type="entry name" value="E3 UBIQUITIN-PROTEIN LIGASE HECTD4-RELATED"/>
    <property type="match status" value="1"/>
</dbReference>
<dbReference type="Pfam" id="PF00632">
    <property type="entry name" value="HECT"/>
    <property type="match status" value="1"/>
</dbReference>
<dbReference type="SMART" id="SM00119">
    <property type="entry name" value="HECTc"/>
    <property type="match status" value="1"/>
</dbReference>
<dbReference type="SUPFAM" id="SSF56204">
    <property type="entry name" value="Hect, E3 ligase catalytic domain"/>
    <property type="match status" value="1"/>
</dbReference>
<dbReference type="PROSITE" id="PS50237">
    <property type="entry name" value="HECT"/>
    <property type="match status" value="1"/>
</dbReference>
<feature type="chain" id="PRO_0000342681" description="Probable E3 ubiquitin-protein ligase HECTD4">
    <location>
        <begin position="1"/>
        <end position="3996"/>
    </location>
</feature>
<feature type="transmembrane region" description="Helical" evidence="2">
    <location>
        <begin position="282"/>
        <end position="302"/>
    </location>
</feature>
<feature type="domain" description="HECT" evidence="3">
    <location>
        <begin position="3627"/>
        <end position="3996"/>
    </location>
</feature>
<feature type="region of interest" description="Disordered" evidence="4">
    <location>
        <begin position="1494"/>
        <end position="1524"/>
    </location>
</feature>
<feature type="region of interest" description="Disordered" evidence="4">
    <location>
        <begin position="1616"/>
        <end position="1637"/>
    </location>
</feature>
<feature type="region of interest" description="Disordered" evidence="4">
    <location>
        <begin position="2219"/>
        <end position="2245"/>
    </location>
</feature>
<feature type="region of interest" description="Disordered" evidence="4">
    <location>
        <begin position="2859"/>
        <end position="2919"/>
    </location>
</feature>
<feature type="region of interest" description="Disordered" evidence="4">
    <location>
        <begin position="3017"/>
        <end position="3053"/>
    </location>
</feature>
<feature type="region of interest" description="Disordered" evidence="4">
    <location>
        <begin position="3327"/>
        <end position="3403"/>
    </location>
</feature>
<feature type="compositionally biased region" description="Polar residues" evidence="4">
    <location>
        <begin position="1494"/>
        <end position="1510"/>
    </location>
</feature>
<feature type="compositionally biased region" description="Acidic residues" evidence="4">
    <location>
        <begin position="2232"/>
        <end position="2245"/>
    </location>
</feature>
<feature type="compositionally biased region" description="Low complexity" evidence="4">
    <location>
        <begin position="2866"/>
        <end position="2887"/>
    </location>
</feature>
<feature type="compositionally biased region" description="Basic residues" evidence="4">
    <location>
        <begin position="2888"/>
        <end position="2897"/>
    </location>
</feature>
<feature type="compositionally biased region" description="Basic and acidic residues" evidence="4">
    <location>
        <begin position="3017"/>
        <end position="3037"/>
    </location>
</feature>
<feature type="compositionally biased region" description="Basic and acidic residues" evidence="4">
    <location>
        <begin position="3327"/>
        <end position="3341"/>
    </location>
</feature>
<feature type="compositionally biased region" description="Basic and acidic residues" evidence="4">
    <location>
        <begin position="3370"/>
        <end position="3403"/>
    </location>
</feature>
<feature type="active site" description="Glycyl thioester intermediate" evidence="3">
    <location>
        <position position="3964"/>
    </location>
</feature>
<feature type="modified residue" description="Phosphothreonine" evidence="10">
    <location>
        <position position="2080"/>
    </location>
</feature>
<feature type="splice variant" id="VSP_047465" description="In isoform 5." evidence="8">
    <original>M</original>
    <variation>MGSSAAAAAAAAAAADSAQWLSVKEETIFLHDGLIRVTDLAELPSEILGAPEAADTDLEILTFETKNPSELAERLRSVCGNQSNAYARLLEYRLNALRGLWNAQRQLALEEQHERESSGDEETLALLKRQGLLQQPEQAPFTSRMGLLLVFPLIQSQSRTDPSLCNITAEVLLNCLRDCQPLSLTKEPADCLNGIETLLCSWLEETSDTGRHIPHKQKENAAAALVALACARGSLKTFVHTVHLLQKQTDLGSLPVADVLYRLLLLEGGPGSPSCLLGGKHIVSWGYEDMLPAPDSNTGSSSENKDADLGRCLTADGLYLYTTNSVGRGVSKLGSGLHGTLRGFVYCRNEELEPGWVAFGSGSLLHRPVSFDNKPHSLFQVIDQNTLQVCQVVPM</variation>
    <location>
        <position position="1"/>
    </location>
</feature>
<feature type="splice variant" id="VSP_047466" description="In isoform 5." evidence="8">
    <original>R</original>
    <variation>ILASSLVYNISDGQFTSRADLIDAAGSSLGRGALVPGLG</variation>
    <location>
        <position position="169"/>
    </location>
</feature>
<feature type="splice variant" id="VSP_039451" description="In isoform 4." evidence="7">
    <location>
        <begin position="483"/>
        <end position="484"/>
    </location>
</feature>
<feature type="splice variant" id="VSP_039452" description="In isoform 3, isoform 4 and isoform 5." evidence="6 7 8">
    <location>
        <begin position="717"/>
        <end position="726"/>
    </location>
</feature>
<feature type="splice variant" id="VSP_039453" description="In isoform 3 and isoform 5." evidence="6 7 8">
    <original>EVIQ</original>
    <variation>YVAV</variation>
    <location>
        <begin position="896"/>
        <end position="899"/>
    </location>
</feature>
<feature type="splice variant" id="VSP_039454" description="In isoform 3 and isoform 5." evidence="6 7 8">
    <location>
        <begin position="900"/>
        <end position="3996"/>
    </location>
</feature>
<feature type="splice variant" id="VSP_034529" description="In isoform 2." evidence="6">
    <original>NELVQ</original>
    <variation>SEQPF</variation>
    <location>
        <begin position="2382"/>
        <end position="2386"/>
    </location>
</feature>
<feature type="splice variant" id="VSP_034530" description="In isoform 2." evidence="6">
    <location>
        <begin position="2387"/>
        <end position="3996"/>
    </location>
</feature>
<feature type="sequence variant" id="VAR_088303" description="In NEDSSCC." evidence="5">
    <location>
        <begin position="312"/>
        <end position="3996"/>
    </location>
</feature>
<feature type="sequence variant" id="VAR_088304" description="In NEDSSCC; uncertain significance." evidence="5">
    <original>R</original>
    <variation>W</variation>
    <location>
        <position position="1203"/>
    </location>
</feature>
<feature type="sequence variant" id="VAR_088305" description="In NEDSSCC." evidence="5">
    <location>
        <begin position="1701"/>
        <end position="3996"/>
    </location>
</feature>
<feature type="sequence variant" id="VAR_088306" description="In NEDSSCC; uncertain significance." evidence="5">
    <original>T</original>
    <variation>R</variation>
    <location>
        <position position="1843"/>
    </location>
</feature>
<feature type="sequence variant" id="VAR_088307" description="In NEDSSCC; uncertain significance." evidence="5">
    <original>H</original>
    <variation>Y</variation>
    <location>
        <position position="2985"/>
    </location>
</feature>
<feature type="sequence variant" id="VAR_088308" description="In NEDSSCC; uncertain significance." evidence="5">
    <original>V</original>
    <variation>M</variation>
    <location>
        <position position="3566"/>
    </location>
</feature>
<feature type="sequence conflict" description="In Ref. 3; AAH65706." evidence="9" ref="3">
    <original>A</original>
    <variation>G</variation>
    <location>
        <position position="170"/>
    </location>
</feature>
<feature type="sequence conflict" description="In Ref. 4; BAC03671." evidence="9" ref="4">
    <original>Y</original>
    <variation>C</variation>
    <location>
        <position position="681"/>
    </location>
</feature>
<feature type="sequence conflict" description="In Ref. 3; AAH65706." evidence="9" ref="3">
    <original>K</original>
    <variation>E</variation>
    <location>
        <position position="801"/>
    </location>
</feature>
<feature type="sequence conflict" description="In Ref. 4; AK054654." evidence="9" ref="4">
    <original>T</original>
    <variation>I</variation>
    <location>
        <position position="2019"/>
    </location>
</feature>
<feature type="sequence conflict" description="In Ref. 7; AAF36539." evidence="9" ref="7">
    <original>E</original>
    <variation>G</variation>
    <location>
        <position position="2702"/>
    </location>
</feature>
<feature type="sequence conflict" description="In Ref. 7; AAF36539." evidence="9" ref="7">
    <original>S</original>
    <variation>T</variation>
    <location>
        <position position="2867"/>
    </location>
</feature>
<feature type="sequence conflict" description="In Ref. 7; AAF36539." evidence="9" ref="7">
    <original>KR</original>
    <variation>NA</variation>
    <location>
        <begin position="2896"/>
        <end position="2897"/>
    </location>
</feature>
<feature type="sequence conflict" description="In Ref. 7; AAF36539." evidence="9" ref="7">
    <original>S</original>
    <variation>C</variation>
    <location>
        <position position="2902"/>
    </location>
</feature>
<feature type="sequence conflict" description="In Ref. 7; AAF36539." evidence="9" ref="7">
    <original>S</original>
    <variation>P</variation>
    <location>
        <position position="3153"/>
    </location>
</feature>
<feature type="sequence conflict" description="In Ref. 7; AAF36539." evidence="9" ref="7">
    <original>R</original>
    <variation>Q</variation>
    <location>
        <position position="3182"/>
    </location>
</feature>
<feature type="sequence conflict" description="In Ref. 7; AAF36539." evidence="9" ref="7">
    <original>L</original>
    <variation>F</variation>
    <location>
        <position position="3191"/>
    </location>
</feature>
<feature type="sequence conflict" description="In Ref. 7; AAF36539." evidence="9" ref="7">
    <original>DR</original>
    <variation>YQ</variation>
    <location>
        <begin position="3419"/>
        <end position="3420"/>
    </location>
</feature>
<feature type="sequence conflict" description="In Ref. 7; AAF36539." evidence="9" ref="7">
    <original>S</original>
    <variation>A</variation>
    <location>
        <position position="3665"/>
    </location>
</feature>
<feature type="sequence conflict" description="In Ref. 3; AAH06270." evidence="9" ref="3">
    <original>P</original>
    <variation>T</variation>
    <location>
        <position position="3723"/>
    </location>
</feature>
<feature type="sequence conflict" description="In Ref. 3; AAH06270." evidence="9" ref="3">
    <original>W</original>
    <variation>R</variation>
    <location>
        <position position="3726"/>
    </location>
</feature>
<feature type="sequence conflict" description="In Ref. 7; AAF36539." evidence="9" ref="7">
    <original>EP</original>
    <variation>DA</variation>
    <location>
        <begin position="3732"/>
        <end position="3733"/>
    </location>
</feature>
<feature type="sequence conflict" description="In Ref. 7; AAF36539." evidence="9" ref="7">
    <original>E</original>
    <variation>R</variation>
    <location>
        <position position="3798"/>
    </location>
</feature>
<feature type="sequence conflict" description="In Ref. 7; AAF36539." evidence="9" ref="7">
    <original>E</original>
    <variation>A</variation>
    <location>
        <position position="3830"/>
    </location>
</feature>
<feature type="sequence conflict" description="In Ref. 7; AAF36539." evidence="9" ref="7">
    <original>C</original>
    <variation>G</variation>
    <location>
        <position position="3985"/>
    </location>
</feature>
<accession>Q9Y4D8</accession>
<accession>L8B0P6</accession>
<accession>Q3MJD5</accession>
<accession>Q6P0A0</accession>
<accession>Q7L530</accession>
<accession>Q8NB70</accession>
<accession>Q8WU73</accession>
<accession>Q96NT9</accession>
<accession>Q9NZS4</accession>
<accession>Q9UFT6</accession>
<name>HECD4_HUMAN</name>
<protein>
    <recommendedName>
        <fullName>Probable E3 ubiquitin-protein ligase HECTD4</fullName>
        <ecNumber>2.3.2.26</ecNumber>
    </recommendedName>
    <alternativeName>
        <fullName>HECT domain-containing protein 4</fullName>
    </alternativeName>
    <alternativeName>
        <fullName>HECT-type E3 ubiquitin transferase HECTD4</fullName>
    </alternativeName>
</protein>
<organism>
    <name type="scientific">Homo sapiens</name>
    <name type="common">Human</name>
    <dbReference type="NCBI Taxonomy" id="9606"/>
    <lineage>
        <taxon>Eukaryota</taxon>
        <taxon>Metazoa</taxon>
        <taxon>Chordata</taxon>
        <taxon>Craniata</taxon>
        <taxon>Vertebrata</taxon>
        <taxon>Euteleostomi</taxon>
        <taxon>Mammalia</taxon>
        <taxon>Eutheria</taxon>
        <taxon>Euarchontoglires</taxon>
        <taxon>Primates</taxon>
        <taxon>Haplorrhini</taxon>
        <taxon>Catarrhini</taxon>
        <taxon>Hominidae</taxon>
        <taxon>Homo</taxon>
    </lineage>
</organism>